<comment type="function">
    <text evidence="1">Catalyzes the attachment of serine to tRNA(Ser). Is also able to aminoacylate tRNA(Sec) with serine, to form the misacylated tRNA L-seryl-tRNA(Sec), which will be further converted into selenocysteinyl-tRNA(Sec).</text>
</comment>
<comment type="catalytic activity">
    <reaction evidence="1">
        <text>tRNA(Ser) + L-serine + ATP = L-seryl-tRNA(Ser) + AMP + diphosphate + H(+)</text>
        <dbReference type="Rhea" id="RHEA:12292"/>
        <dbReference type="Rhea" id="RHEA-COMP:9669"/>
        <dbReference type="Rhea" id="RHEA-COMP:9703"/>
        <dbReference type="ChEBI" id="CHEBI:15378"/>
        <dbReference type="ChEBI" id="CHEBI:30616"/>
        <dbReference type="ChEBI" id="CHEBI:33019"/>
        <dbReference type="ChEBI" id="CHEBI:33384"/>
        <dbReference type="ChEBI" id="CHEBI:78442"/>
        <dbReference type="ChEBI" id="CHEBI:78533"/>
        <dbReference type="ChEBI" id="CHEBI:456215"/>
        <dbReference type="EC" id="6.1.1.11"/>
    </reaction>
</comment>
<comment type="catalytic activity">
    <reaction evidence="1">
        <text>tRNA(Sec) + L-serine + ATP = L-seryl-tRNA(Sec) + AMP + diphosphate + H(+)</text>
        <dbReference type="Rhea" id="RHEA:42580"/>
        <dbReference type="Rhea" id="RHEA-COMP:9742"/>
        <dbReference type="Rhea" id="RHEA-COMP:10128"/>
        <dbReference type="ChEBI" id="CHEBI:15378"/>
        <dbReference type="ChEBI" id="CHEBI:30616"/>
        <dbReference type="ChEBI" id="CHEBI:33019"/>
        <dbReference type="ChEBI" id="CHEBI:33384"/>
        <dbReference type="ChEBI" id="CHEBI:78442"/>
        <dbReference type="ChEBI" id="CHEBI:78533"/>
        <dbReference type="ChEBI" id="CHEBI:456215"/>
        <dbReference type="EC" id="6.1.1.11"/>
    </reaction>
</comment>
<comment type="pathway">
    <text evidence="1">Aminoacyl-tRNA biosynthesis; selenocysteinyl-tRNA(Sec) biosynthesis; L-seryl-tRNA(Sec) from L-serine and tRNA(Sec): step 1/1.</text>
</comment>
<comment type="subunit">
    <text evidence="1">Homodimer. The tRNA molecule binds across the dimer.</text>
</comment>
<comment type="subcellular location">
    <subcellularLocation>
        <location evidence="1">Cytoplasm</location>
    </subcellularLocation>
</comment>
<comment type="domain">
    <text evidence="1">Consists of two distinct domains, a catalytic core and a N-terminal extension that is involved in tRNA binding.</text>
</comment>
<comment type="similarity">
    <text evidence="1">Belongs to the class-II aminoacyl-tRNA synthetase family. Type-1 seryl-tRNA synthetase subfamily.</text>
</comment>
<reference key="1">
    <citation type="submission" date="2008-04" db="EMBL/GenBank/DDBJ databases">
        <title>Complete sequence of chromosome of Methylobacterium populi BJ001.</title>
        <authorList>
            <consortium name="US DOE Joint Genome Institute"/>
            <person name="Copeland A."/>
            <person name="Lucas S."/>
            <person name="Lapidus A."/>
            <person name="Glavina del Rio T."/>
            <person name="Dalin E."/>
            <person name="Tice H."/>
            <person name="Bruce D."/>
            <person name="Goodwin L."/>
            <person name="Pitluck S."/>
            <person name="Chertkov O."/>
            <person name="Brettin T."/>
            <person name="Detter J.C."/>
            <person name="Han C."/>
            <person name="Kuske C.R."/>
            <person name="Schmutz J."/>
            <person name="Larimer F."/>
            <person name="Land M."/>
            <person name="Hauser L."/>
            <person name="Kyrpides N."/>
            <person name="Mikhailova N."/>
            <person name="Marx C."/>
            <person name="Richardson P."/>
        </authorList>
    </citation>
    <scope>NUCLEOTIDE SEQUENCE [LARGE SCALE GENOMIC DNA]</scope>
    <source>
        <strain>ATCC BAA-705 / NCIMB 13946 / BJ001</strain>
    </source>
</reference>
<name>SYS_METPB</name>
<sequence length="428" mass="46887">MHDIRAIRENPEAFDRDLERRGLSPLSAELIALDDARKGAVSAAQAAQERRNALSKEIGAAKKAKDEARAAELMAEVARLKEEAPGLDAAQAQAAKVLDERLAAIPNQPKADVPLGADEHGNVEYRRFDSSRARLAEGRQHFELGEATGLMDFEAAAKLSGSRFVVLKGPLARLERALGQFMLDLHTGEHGYTEVVPPVLVRDEAMFGTAQLPKFRDDQFAAGDGFWLIPTAEVPLTNLVRENILAEDELPLRFTALTPCFRAEAGAAGRDTRGMLRQHQFNKVELVSITAPEKSAEEHERMLACAEAVLQKLDLTYRVMTLCTGDMGFASQKTYDIEVWVPGQQTYREISSCSVCGEFQARRMNARYRAKEGRGVGFVHTLNGSGVAVGRALIAVMENYQNPDGSVTIPSVLQPYMGGLNRIEGPNT</sequence>
<organism>
    <name type="scientific">Methylorubrum populi (strain ATCC BAA-705 / NCIMB 13946 / BJ001)</name>
    <name type="common">Methylobacterium populi</name>
    <dbReference type="NCBI Taxonomy" id="441620"/>
    <lineage>
        <taxon>Bacteria</taxon>
        <taxon>Pseudomonadati</taxon>
        <taxon>Pseudomonadota</taxon>
        <taxon>Alphaproteobacteria</taxon>
        <taxon>Hyphomicrobiales</taxon>
        <taxon>Methylobacteriaceae</taxon>
        <taxon>Methylorubrum</taxon>
    </lineage>
</organism>
<dbReference type="EC" id="6.1.1.11" evidence="1"/>
<dbReference type="EMBL" id="CP001029">
    <property type="protein sequence ID" value="ACB82849.1"/>
    <property type="molecule type" value="Genomic_DNA"/>
</dbReference>
<dbReference type="RefSeq" id="WP_012456447.1">
    <property type="nucleotide sequence ID" value="NC_010725.1"/>
</dbReference>
<dbReference type="SMR" id="B1ZJ12"/>
<dbReference type="STRING" id="441620.Mpop_4753"/>
<dbReference type="KEGG" id="mpo:Mpop_4753"/>
<dbReference type="eggNOG" id="COG0172">
    <property type="taxonomic scope" value="Bacteria"/>
</dbReference>
<dbReference type="HOGENOM" id="CLU_023797_1_1_5"/>
<dbReference type="OrthoDB" id="9804647at2"/>
<dbReference type="UniPathway" id="UPA00906">
    <property type="reaction ID" value="UER00895"/>
</dbReference>
<dbReference type="Proteomes" id="UP000007136">
    <property type="component" value="Chromosome"/>
</dbReference>
<dbReference type="GO" id="GO:0005737">
    <property type="term" value="C:cytoplasm"/>
    <property type="evidence" value="ECO:0007669"/>
    <property type="project" value="UniProtKB-SubCell"/>
</dbReference>
<dbReference type="GO" id="GO:0005524">
    <property type="term" value="F:ATP binding"/>
    <property type="evidence" value="ECO:0007669"/>
    <property type="project" value="UniProtKB-UniRule"/>
</dbReference>
<dbReference type="GO" id="GO:0004828">
    <property type="term" value="F:serine-tRNA ligase activity"/>
    <property type="evidence" value="ECO:0007669"/>
    <property type="project" value="UniProtKB-UniRule"/>
</dbReference>
<dbReference type="GO" id="GO:0016260">
    <property type="term" value="P:selenocysteine biosynthetic process"/>
    <property type="evidence" value="ECO:0007669"/>
    <property type="project" value="UniProtKB-UniRule"/>
</dbReference>
<dbReference type="GO" id="GO:0006434">
    <property type="term" value="P:seryl-tRNA aminoacylation"/>
    <property type="evidence" value="ECO:0007669"/>
    <property type="project" value="UniProtKB-UniRule"/>
</dbReference>
<dbReference type="CDD" id="cd00770">
    <property type="entry name" value="SerRS_core"/>
    <property type="match status" value="1"/>
</dbReference>
<dbReference type="Gene3D" id="3.30.930.10">
    <property type="entry name" value="Bira Bifunctional Protein, Domain 2"/>
    <property type="match status" value="1"/>
</dbReference>
<dbReference type="Gene3D" id="1.10.287.40">
    <property type="entry name" value="Serine-tRNA synthetase, tRNA binding domain"/>
    <property type="match status" value="1"/>
</dbReference>
<dbReference type="HAMAP" id="MF_00176">
    <property type="entry name" value="Ser_tRNA_synth_type1"/>
    <property type="match status" value="1"/>
</dbReference>
<dbReference type="InterPro" id="IPR002314">
    <property type="entry name" value="aa-tRNA-synt_IIb"/>
</dbReference>
<dbReference type="InterPro" id="IPR006195">
    <property type="entry name" value="aa-tRNA-synth_II"/>
</dbReference>
<dbReference type="InterPro" id="IPR045864">
    <property type="entry name" value="aa-tRNA-synth_II/BPL/LPL"/>
</dbReference>
<dbReference type="InterPro" id="IPR002317">
    <property type="entry name" value="Ser-tRNA-ligase_type_1"/>
</dbReference>
<dbReference type="InterPro" id="IPR015866">
    <property type="entry name" value="Ser-tRNA-synth_1_N"/>
</dbReference>
<dbReference type="InterPro" id="IPR042103">
    <property type="entry name" value="SerRS_1_N_sf"/>
</dbReference>
<dbReference type="InterPro" id="IPR033729">
    <property type="entry name" value="SerRS_core"/>
</dbReference>
<dbReference type="InterPro" id="IPR010978">
    <property type="entry name" value="tRNA-bd_arm"/>
</dbReference>
<dbReference type="NCBIfam" id="TIGR00414">
    <property type="entry name" value="serS"/>
    <property type="match status" value="1"/>
</dbReference>
<dbReference type="PANTHER" id="PTHR43697:SF1">
    <property type="entry name" value="SERINE--TRNA LIGASE"/>
    <property type="match status" value="1"/>
</dbReference>
<dbReference type="PANTHER" id="PTHR43697">
    <property type="entry name" value="SERYL-TRNA SYNTHETASE"/>
    <property type="match status" value="1"/>
</dbReference>
<dbReference type="Pfam" id="PF02403">
    <property type="entry name" value="Seryl_tRNA_N"/>
    <property type="match status" value="1"/>
</dbReference>
<dbReference type="Pfam" id="PF00587">
    <property type="entry name" value="tRNA-synt_2b"/>
    <property type="match status" value="1"/>
</dbReference>
<dbReference type="PIRSF" id="PIRSF001529">
    <property type="entry name" value="Ser-tRNA-synth_IIa"/>
    <property type="match status" value="1"/>
</dbReference>
<dbReference type="PRINTS" id="PR00981">
    <property type="entry name" value="TRNASYNTHSER"/>
</dbReference>
<dbReference type="SUPFAM" id="SSF55681">
    <property type="entry name" value="Class II aaRS and biotin synthetases"/>
    <property type="match status" value="1"/>
</dbReference>
<dbReference type="SUPFAM" id="SSF46589">
    <property type="entry name" value="tRNA-binding arm"/>
    <property type="match status" value="1"/>
</dbReference>
<dbReference type="PROSITE" id="PS50862">
    <property type="entry name" value="AA_TRNA_LIGASE_II"/>
    <property type="match status" value="1"/>
</dbReference>
<protein>
    <recommendedName>
        <fullName evidence="1">Serine--tRNA ligase</fullName>
        <ecNumber evidence="1">6.1.1.11</ecNumber>
    </recommendedName>
    <alternativeName>
        <fullName evidence="1">Seryl-tRNA synthetase</fullName>
        <shortName evidence="1">SerRS</shortName>
    </alternativeName>
    <alternativeName>
        <fullName evidence="1">Seryl-tRNA(Ser/Sec) synthetase</fullName>
    </alternativeName>
</protein>
<accession>B1ZJ12</accession>
<feature type="chain" id="PRO_1000098093" description="Serine--tRNA ligase">
    <location>
        <begin position="1"/>
        <end position="428"/>
    </location>
</feature>
<feature type="binding site" evidence="1">
    <location>
        <begin position="231"/>
        <end position="233"/>
    </location>
    <ligand>
        <name>L-serine</name>
        <dbReference type="ChEBI" id="CHEBI:33384"/>
    </ligand>
</feature>
<feature type="binding site" evidence="1">
    <location>
        <begin position="262"/>
        <end position="264"/>
    </location>
    <ligand>
        <name>ATP</name>
        <dbReference type="ChEBI" id="CHEBI:30616"/>
    </ligand>
</feature>
<feature type="binding site" evidence="1">
    <location>
        <position position="285"/>
    </location>
    <ligand>
        <name>L-serine</name>
        <dbReference type="ChEBI" id="CHEBI:33384"/>
    </ligand>
</feature>
<feature type="binding site" evidence="1">
    <location>
        <begin position="349"/>
        <end position="352"/>
    </location>
    <ligand>
        <name>ATP</name>
        <dbReference type="ChEBI" id="CHEBI:30616"/>
    </ligand>
</feature>
<feature type="binding site" evidence="1">
    <location>
        <position position="385"/>
    </location>
    <ligand>
        <name>L-serine</name>
        <dbReference type="ChEBI" id="CHEBI:33384"/>
    </ligand>
</feature>
<evidence type="ECO:0000255" key="1">
    <source>
        <dbReference type="HAMAP-Rule" id="MF_00176"/>
    </source>
</evidence>
<gene>
    <name evidence="1" type="primary">serS</name>
    <name type="ordered locus">Mpop_4753</name>
</gene>
<keyword id="KW-0030">Aminoacyl-tRNA synthetase</keyword>
<keyword id="KW-0067">ATP-binding</keyword>
<keyword id="KW-0963">Cytoplasm</keyword>
<keyword id="KW-0436">Ligase</keyword>
<keyword id="KW-0547">Nucleotide-binding</keyword>
<keyword id="KW-0648">Protein biosynthesis</keyword>
<proteinExistence type="inferred from homology"/>